<protein>
    <recommendedName>
        <fullName evidence="1">Large ribosomal subunit protein bL34</fullName>
    </recommendedName>
    <alternativeName>
        <fullName evidence="2">50S ribosomal protein L34</fullName>
    </alternativeName>
</protein>
<proteinExistence type="inferred from homology"/>
<gene>
    <name evidence="1" type="primary">rpmH</name>
    <name type="ordered locus">VP0005</name>
</gene>
<comment type="similarity">
    <text evidence="1">Belongs to the bacterial ribosomal protein bL34 family.</text>
</comment>
<reference key="1">
    <citation type="journal article" date="2003" name="Lancet">
        <title>Genome sequence of Vibrio parahaemolyticus: a pathogenic mechanism distinct from that of V. cholerae.</title>
        <authorList>
            <person name="Makino K."/>
            <person name="Oshima K."/>
            <person name="Kurokawa K."/>
            <person name="Yokoyama K."/>
            <person name="Uda T."/>
            <person name="Tagomori K."/>
            <person name="Iijima Y."/>
            <person name="Najima M."/>
            <person name="Nakano M."/>
            <person name="Yamashita A."/>
            <person name="Kubota Y."/>
            <person name="Kimura S."/>
            <person name="Yasunaga T."/>
            <person name="Honda T."/>
            <person name="Shinagawa H."/>
            <person name="Hattori M."/>
            <person name="Iida T."/>
        </authorList>
    </citation>
    <scope>NUCLEOTIDE SEQUENCE [LARGE SCALE GENOMIC DNA]</scope>
    <source>
        <strain>RIMD 2210633</strain>
    </source>
</reference>
<dbReference type="EMBL" id="BA000031">
    <property type="protein sequence ID" value="BAC58268.1"/>
    <property type="molecule type" value="Genomic_DNA"/>
</dbReference>
<dbReference type="RefSeq" id="NP_796384.1">
    <property type="nucleotide sequence ID" value="NC_004603.1"/>
</dbReference>
<dbReference type="RefSeq" id="WP_005378825.1">
    <property type="nucleotide sequence ID" value="NC_004603.1"/>
</dbReference>
<dbReference type="SMR" id="Q87TR3"/>
<dbReference type="GeneID" id="96872182"/>
<dbReference type="KEGG" id="vpa:VP0005"/>
<dbReference type="PATRIC" id="fig|223926.6.peg.6"/>
<dbReference type="eggNOG" id="COG0230">
    <property type="taxonomic scope" value="Bacteria"/>
</dbReference>
<dbReference type="HOGENOM" id="CLU_129938_2_0_6"/>
<dbReference type="PRO" id="PR:Q87TR3"/>
<dbReference type="Proteomes" id="UP000002493">
    <property type="component" value="Chromosome 1"/>
</dbReference>
<dbReference type="GO" id="GO:1990904">
    <property type="term" value="C:ribonucleoprotein complex"/>
    <property type="evidence" value="ECO:0007669"/>
    <property type="project" value="UniProtKB-KW"/>
</dbReference>
<dbReference type="GO" id="GO:0005840">
    <property type="term" value="C:ribosome"/>
    <property type="evidence" value="ECO:0007669"/>
    <property type="project" value="UniProtKB-KW"/>
</dbReference>
<dbReference type="GO" id="GO:0003735">
    <property type="term" value="F:structural constituent of ribosome"/>
    <property type="evidence" value="ECO:0007669"/>
    <property type="project" value="InterPro"/>
</dbReference>
<dbReference type="GO" id="GO:0006412">
    <property type="term" value="P:translation"/>
    <property type="evidence" value="ECO:0007669"/>
    <property type="project" value="UniProtKB-UniRule"/>
</dbReference>
<dbReference type="FunFam" id="1.10.287.3980:FF:000001">
    <property type="entry name" value="Mitochondrial ribosomal protein L34"/>
    <property type="match status" value="1"/>
</dbReference>
<dbReference type="Gene3D" id="1.10.287.3980">
    <property type="match status" value="1"/>
</dbReference>
<dbReference type="HAMAP" id="MF_00391">
    <property type="entry name" value="Ribosomal_bL34"/>
    <property type="match status" value="1"/>
</dbReference>
<dbReference type="InterPro" id="IPR000271">
    <property type="entry name" value="Ribosomal_bL34"/>
</dbReference>
<dbReference type="InterPro" id="IPR020939">
    <property type="entry name" value="Ribosomal_bL34_CS"/>
</dbReference>
<dbReference type="NCBIfam" id="TIGR01030">
    <property type="entry name" value="rpmH_bact"/>
    <property type="match status" value="1"/>
</dbReference>
<dbReference type="PANTHER" id="PTHR14503:SF4">
    <property type="entry name" value="LARGE RIBOSOMAL SUBUNIT PROTEIN BL34M"/>
    <property type="match status" value="1"/>
</dbReference>
<dbReference type="PANTHER" id="PTHR14503">
    <property type="entry name" value="MITOCHONDRIAL RIBOSOMAL PROTEIN 34 FAMILY MEMBER"/>
    <property type="match status" value="1"/>
</dbReference>
<dbReference type="Pfam" id="PF00468">
    <property type="entry name" value="Ribosomal_L34"/>
    <property type="match status" value="1"/>
</dbReference>
<dbReference type="PROSITE" id="PS00784">
    <property type="entry name" value="RIBOSOMAL_L34"/>
    <property type="match status" value="1"/>
</dbReference>
<accession>Q87TR3</accession>
<name>RL34_VIBPA</name>
<keyword id="KW-0687">Ribonucleoprotein</keyword>
<keyword id="KW-0689">Ribosomal protein</keyword>
<feature type="chain" id="PRO_0000187501" description="Large ribosomal subunit protein bL34">
    <location>
        <begin position="1"/>
        <end position="44"/>
    </location>
</feature>
<evidence type="ECO:0000255" key="1">
    <source>
        <dbReference type="HAMAP-Rule" id="MF_00391"/>
    </source>
</evidence>
<evidence type="ECO:0000305" key="2"/>
<sequence length="44" mass="5180">MKRTFQPTVLKRKRTHGFRARMATKNGRKVINARRAKGRARLSK</sequence>
<organism>
    <name type="scientific">Vibrio parahaemolyticus serotype O3:K6 (strain RIMD 2210633)</name>
    <dbReference type="NCBI Taxonomy" id="223926"/>
    <lineage>
        <taxon>Bacteria</taxon>
        <taxon>Pseudomonadati</taxon>
        <taxon>Pseudomonadota</taxon>
        <taxon>Gammaproteobacteria</taxon>
        <taxon>Vibrionales</taxon>
        <taxon>Vibrionaceae</taxon>
        <taxon>Vibrio</taxon>
    </lineage>
</organism>